<proteinExistence type="inferred from homology"/>
<accession>Q2TA46</accession>
<feature type="chain" id="PRO_0000248181" description="Ubiquitin-like protein 3">
    <location>
        <begin position="1"/>
        <end position="114"/>
    </location>
</feature>
<feature type="propeptide" id="PRO_0000248182" description="Removed in mature form" evidence="4">
    <location>
        <begin position="115"/>
        <end position="117"/>
    </location>
</feature>
<feature type="domain" description="Ubiquitin-like" evidence="3">
    <location>
        <begin position="10"/>
        <end position="88"/>
    </location>
</feature>
<feature type="modified residue" description="Cysteine methyl ester" evidence="4">
    <location>
        <position position="114"/>
    </location>
</feature>
<feature type="lipid moiety-binding region" description="S-palmitoyl cysteine" evidence="2">
    <location>
        <position position="113"/>
    </location>
</feature>
<feature type="lipid moiety-binding region" description="S-geranylgeranyl cysteine" evidence="2">
    <location>
        <position position="114"/>
    </location>
</feature>
<name>UBL3_BOVIN</name>
<dbReference type="EMBL" id="BC111119">
    <property type="protein sequence ID" value="AAI11120.1"/>
    <property type="molecule type" value="mRNA"/>
</dbReference>
<dbReference type="RefSeq" id="NP_001033233.1">
    <property type="nucleotide sequence ID" value="NM_001038144.2"/>
</dbReference>
<dbReference type="BMRB" id="Q2TA46"/>
<dbReference type="SMR" id="Q2TA46"/>
<dbReference type="FunCoup" id="Q2TA46">
    <property type="interactions" value="1659"/>
</dbReference>
<dbReference type="STRING" id="9913.ENSBTAP00000035622"/>
<dbReference type="PaxDb" id="9913-ENSBTAP00000035622"/>
<dbReference type="GeneID" id="526950"/>
<dbReference type="KEGG" id="bta:526950"/>
<dbReference type="CTD" id="5412"/>
<dbReference type="VEuPathDB" id="HostDB:ENSBTAG00000012170"/>
<dbReference type="eggNOG" id="ENOG502RYGN">
    <property type="taxonomic scope" value="Eukaryota"/>
</dbReference>
<dbReference type="InParanoid" id="Q2TA46"/>
<dbReference type="OMA" id="WPDEWYE"/>
<dbReference type="OrthoDB" id="1043111at2759"/>
<dbReference type="Proteomes" id="UP000009136">
    <property type="component" value="Chromosome 12"/>
</dbReference>
<dbReference type="Bgee" id="ENSBTAG00000012170">
    <property type="expression patterns" value="Expressed in occipital lobe and 102 other cell types or tissues"/>
</dbReference>
<dbReference type="GO" id="GO:0005886">
    <property type="term" value="C:plasma membrane"/>
    <property type="evidence" value="ECO:0007669"/>
    <property type="project" value="UniProtKB-SubCell"/>
</dbReference>
<dbReference type="CDD" id="cd17048">
    <property type="entry name" value="Ubl_UBL3"/>
    <property type="match status" value="1"/>
</dbReference>
<dbReference type="FunFam" id="3.10.20.90:FF:000167">
    <property type="entry name" value="Ubiquitin-like 3a"/>
    <property type="match status" value="1"/>
</dbReference>
<dbReference type="Gene3D" id="3.10.20.90">
    <property type="entry name" value="Phosphatidylinositol 3-kinase Catalytic Subunit, Chain A, domain 1"/>
    <property type="match status" value="1"/>
</dbReference>
<dbReference type="InterPro" id="IPR017000">
    <property type="entry name" value="MUB"/>
</dbReference>
<dbReference type="InterPro" id="IPR000626">
    <property type="entry name" value="Ubiquitin-like_dom"/>
</dbReference>
<dbReference type="InterPro" id="IPR029071">
    <property type="entry name" value="Ubiquitin-like_domsf"/>
</dbReference>
<dbReference type="InterPro" id="IPR040015">
    <property type="entry name" value="UBL3-like"/>
</dbReference>
<dbReference type="InterPro" id="IPR039540">
    <property type="entry name" value="UBL3-like_ubiquitin_dom"/>
</dbReference>
<dbReference type="InterPro" id="IPR047977">
    <property type="entry name" value="UBL3_Ubl_met"/>
</dbReference>
<dbReference type="PANTHER" id="PTHR13169:SF0">
    <property type="entry name" value="UBIQUITIN-LIKE PROTEIN 3"/>
    <property type="match status" value="1"/>
</dbReference>
<dbReference type="PANTHER" id="PTHR13169">
    <property type="entry name" value="UBIQUITIN-LIKE PROTEIN 3 HCG-1 PROTEIN"/>
    <property type="match status" value="1"/>
</dbReference>
<dbReference type="Pfam" id="PF13881">
    <property type="entry name" value="Rad60-SLD_2"/>
    <property type="match status" value="1"/>
</dbReference>
<dbReference type="PIRSF" id="PIRSF032572">
    <property type="entry name" value="MUB"/>
    <property type="match status" value="1"/>
</dbReference>
<dbReference type="SUPFAM" id="SSF54236">
    <property type="entry name" value="Ubiquitin-like"/>
    <property type="match status" value="1"/>
</dbReference>
<dbReference type="PROSITE" id="PS50053">
    <property type="entry name" value="UBIQUITIN_2"/>
    <property type="match status" value="1"/>
</dbReference>
<sequence>MSSNVPADMINLRLILVSGKTKEFLFSPNDSASDIAKHVYDNWPMDWEEEQVSSPNILRLIYQGRFLHGNVTLGALKLPFGKTTVMHLVARETLPEPNSQGQRNREKTGESNCCVIL</sequence>
<reference key="1">
    <citation type="submission" date="2005-12" db="EMBL/GenBank/DDBJ databases">
        <authorList>
            <consortium name="NIH - Mammalian Gene Collection (MGC) project"/>
        </authorList>
    </citation>
    <scope>NUCLEOTIDE SEQUENCE [LARGE SCALE MRNA]</scope>
    <source>
        <strain>Hereford</strain>
        <tissue>Hypothalamus</tissue>
    </source>
</reference>
<protein>
    <recommendedName>
        <fullName>Ubiquitin-like protein 3</fullName>
    </recommendedName>
    <alternativeName>
        <fullName>Membrane-anchored ubiquitin-fold protein</fullName>
        <shortName>MUB</shortName>
    </alternativeName>
</protein>
<evidence type="ECO:0000250" key="1"/>
<evidence type="ECO:0000250" key="2">
    <source>
        <dbReference type="UniProtKB" id="O95164"/>
    </source>
</evidence>
<evidence type="ECO:0000255" key="3">
    <source>
        <dbReference type="PROSITE-ProRule" id="PRU00214"/>
    </source>
</evidence>
<evidence type="ECO:0000305" key="4"/>
<comment type="subcellular location">
    <subcellularLocation>
        <location evidence="1">Cell membrane</location>
        <topology evidence="1">Lipid-anchor</topology>
    </subcellularLocation>
</comment>
<organism>
    <name type="scientific">Bos taurus</name>
    <name type="common">Bovine</name>
    <dbReference type="NCBI Taxonomy" id="9913"/>
    <lineage>
        <taxon>Eukaryota</taxon>
        <taxon>Metazoa</taxon>
        <taxon>Chordata</taxon>
        <taxon>Craniata</taxon>
        <taxon>Vertebrata</taxon>
        <taxon>Euteleostomi</taxon>
        <taxon>Mammalia</taxon>
        <taxon>Eutheria</taxon>
        <taxon>Laurasiatheria</taxon>
        <taxon>Artiodactyla</taxon>
        <taxon>Ruminantia</taxon>
        <taxon>Pecora</taxon>
        <taxon>Bovidae</taxon>
        <taxon>Bovinae</taxon>
        <taxon>Bos</taxon>
    </lineage>
</organism>
<gene>
    <name type="primary">UBL3</name>
</gene>
<keyword id="KW-1003">Cell membrane</keyword>
<keyword id="KW-0449">Lipoprotein</keyword>
<keyword id="KW-0472">Membrane</keyword>
<keyword id="KW-0488">Methylation</keyword>
<keyword id="KW-0564">Palmitate</keyword>
<keyword id="KW-0636">Prenylation</keyword>
<keyword id="KW-1185">Reference proteome</keyword>